<evidence type="ECO:0000250" key="1">
    <source>
        <dbReference type="UniProtKB" id="L0E2Z4"/>
    </source>
</evidence>
<evidence type="ECO:0000250" key="2">
    <source>
        <dbReference type="UniProtKB" id="O93868"/>
    </source>
</evidence>
<evidence type="ECO:0000255" key="3">
    <source>
        <dbReference type="PROSITE-ProRule" id="PRU10001"/>
    </source>
</evidence>
<evidence type="ECO:0000269" key="4">
    <source>
    </source>
</evidence>
<evidence type="ECO:0000305" key="5"/>
<keyword id="KW-0963">Cytoplasm</keyword>
<keyword id="KW-0521">NADP</keyword>
<keyword id="KW-0560">Oxidoreductase</keyword>
<keyword id="KW-1185">Reference proteome</keyword>
<comment type="subcellular location">
    <subcellularLocation>
        <location evidence="4">Cytoplasm</location>
    </subcellularLocation>
</comment>
<comment type="similarity">
    <text evidence="5">Belongs to the short-chain dehydrogenases/reductases (SDR) family.</text>
</comment>
<proteinExistence type="inferred from homology"/>
<protein>
    <recommendedName>
        <fullName>Uncharacterized oxidoreductase C162.03</fullName>
        <ecNumber>1.-.-.-</ecNumber>
    </recommendedName>
</protein>
<feature type="chain" id="PRO_0000374034" description="Uncharacterized oxidoreductase C162.03">
    <location>
        <begin position="1"/>
        <end position="292"/>
    </location>
</feature>
<feature type="active site" description="Proton donor" evidence="2">
    <location>
        <position position="134"/>
    </location>
</feature>
<feature type="active site" description="Proton acceptor" evidence="3">
    <location>
        <position position="148"/>
    </location>
</feature>
<feature type="active site" description="Lowers pKa of active site Tyr" evidence="2">
    <location>
        <position position="152"/>
    </location>
</feature>
<feature type="binding site" evidence="1">
    <location>
        <position position="17"/>
    </location>
    <ligand>
        <name>NADP(+)</name>
        <dbReference type="ChEBI" id="CHEBI:58349"/>
    </ligand>
</feature>
<feature type="binding site" evidence="1">
    <location>
        <position position="55"/>
    </location>
    <ligand>
        <name>NADP(+)</name>
        <dbReference type="ChEBI" id="CHEBI:58349"/>
    </ligand>
</feature>
<feature type="binding site" evidence="2">
    <location>
        <position position="82"/>
    </location>
    <ligand>
        <name>NADP(+)</name>
        <dbReference type="ChEBI" id="CHEBI:58349"/>
    </ligand>
</feature>
<feature type="binding site" evidence="1">
    <location>
        <position position="115"/>
    </location>
    <ligand>
        <name>NADP(+)</name>
        <dbReference type="ChEBI" id="CHEBI:58349"/>
    </ligand>
</feature>
<feature type="binding site" evidence="2">
    <location>
        <position position="148"/>
    </location>
    <ligand>
        <name>NADP(+)</name>
        <dbReference type="ChEBI" id="CHEBI:58349"/>
    </ligand>
</feature>
<feature type="binding site" evidence="2">
    <location>
        <position position="152"/>
    </location>
    <ligand>
        <name>NADP(+)</name>
        <dbReference type="ChEBI" id="CHEBI:58349"/>
    </ligand>
</feature>
<feature type="binding site" evidence="1">
    <location>
        <position position="184"/>
    </location>
    <ligand>
        <name>NADP(+)</name>
        <dbReference type="ChEBI" id="CHEBI:58349"/>
    </ligand>
</feature>
<organism>
    <name type="scientific">Schizosaccharomyces pombe (strain 972 / ATCC 24843)</name>
    <name type="common">Fission yeast</name>
    <dbReference type="NCBI Taxonomy" id="284812"/>
    <lineage>
        <taxon>Eukaryota</taxon>
        <taxon>Fungi</taxon>
        <taxon>Dikarya</taxon>
        <taxon>Ascomycota</taxon>
        <taxon>Taphrinomycotina</taxon>
        <taxon>Schizosaccharomycetes</taxon>
        <taxon>Schizosaccharomycetales</taxon>
        <taxon>Schizosaccharomycetaceae</taxon>
        <taxon>Schizosaccharomyces</taxon>
    </lineage>
</organism>
<accession>O74628</accession>
<gene>
    <name type="ORF">SPCC162.03</name>
</gene>
<reference key="1">
    <citation type="journal article" date="2002" name="Nature">
        <title>The genome sequence of Schizosaccharomyces pombe.</title>
        <authorList>
            <person name="Wood V."/>
            <person name="Gwilliam R."/>
            <person name="Rajandream M.A."/>
            <person name="Lyne M.H."/>
            <person name="Lyne R."/>
            <person name="Stewart A."/>
            <person name="Sgouros J.G."/>
            <person name="Peat N."/>
            <person name="Hayles J."/>
            <person name="Baker S.G."/>
            <person name="Basham D."/>
            <person name="Bowman S."/>
            <person name="Brooks K."/>
            <person name="Brown D."/>
            <person name="Brown S."/>
            <person name="Chillingworth T."/>
            <person name="Churcher C.M."/>
            <person name="Collins M."/>
            <person name="Connor R."/>
            <person name="Cronin A."/>
            <person name="Davis P."/>
            <person name="Feltwell T."/>
            <person name="Fraser A."/>
            <person name="Gentles S."/>
            <person name="Goble A."/>
            <person name="Hamlin N."/>
            <person name="Harris D.E."/>
            <person name="Hidalgo J."/>
            <person name="Hodgson G."/>
            <person name="Holroyd S."/>
            <person name="Hornsby T."/>
            <person name="Howarth S."/>
            <person name="Huckle E.J."/>
            <person name="Hunt S."/>
            <person name="Jagels K."/>
            <person name="James K.D."/>
            <person name="Jones L."/>
            <person name="Jones M."/>
            <person name="Leather S."/>
            <person name="McDonald S."/>
            <person name="McLean J."/>
            <person name="Mooney P."/>
            <person name="Moule S."/>
            <person name="Mungall K.L."/>
            <person name="Murphy L.D."/>
            <person name="Niblett D."/>
            <person name="Odell C."/>
            <person name="Oliver K."/>
            <person name="O'Neil S."/>
            <person name="Pearson D."/>
            <person name="Quail M.A."/>
            <person name="Rabbinowitsch E."/>
            <person name="Rutherford K.M."/>
            <person name="Rutter S."/>
            <person name="Saunders D."/>
            <person name="Seeger K."/>
            <person name="Sharp S."/>
            <person name="Skelton J."/>
            <person name="Simmonds M.N."/>
            <person name="Squares R."/>
            <person name="Squares S."/>
            <person name="Stevens K."/>
            <person name="Taylor K."/>
            <person name="Taylor R.G."/>
            <person name="Tivey A."/>
            <person name="Walsh S.V."/>
            <person name="Warren T."/>
            <person name="Whitehead S."/>
            <person name="Woodward J.R."/>
            <person name="Volckaert G."/>
            <person name="Aert R."/>
            <person name="Robben J."/>
            <person name="Grymonprez B."/>
            <person name="Weltjens I."/>
            <person name="Vanstreels E."/>
            <person name="Rieger M."/>
            <person name="Schaefer M."/>
            <person name="Mueller-Auer S."/>
            <person name="Gabel C."/>
            <person name="Fuchs M."/>
            <person name="Duesterhoeft A."/>
            <person name="Fritzc C."/>
            <person name="Holzer E."/>
            <person name="Moestl D."/>
            <person name="Hilbert H."/>
            <person name="Borzym K."/>
            <person name="Langer I."/>
            <person name="Beck A."/>
            <person name="Lehrach H."/>
            <person name="Reinhardt R."/>
            <person name="Pohl T.M."/>
            <person name="Eger P."/>
            <person name="Zimmermann W."/>
            <person name="Wedler H."/>
            <person name="Wambutt R."/>
            <person name="Purnelle B."/>
            <person name="Goffeau A."/>
            <person name="Cadieu E."/>
            <person name="Dreano S."/>
            <person name="Gloux S."/>
            <person name="Lelaure V."/>
            <person name="Mottier S."/>
            <person name="Galibert F."/>
            <person name="Aves S.J."/>
            <person name="Xiang Z."/>
            <person name="Hunt C."/>
            <person name="Moore K."/>
            <person name="Hurst S.M."/>
            <person name="Lucas M."/>
            <person name="Rochet M."/>
            <person name="Gaillardin C."/>
            <person name="Tallada V.A."/>
            <person name="Garzon A."/>
            <person name="Thode G."/>
            <person name="Daga R.R."/>
            <person name="Cruzado L."/>
            <person name="Jimenez J."/>
            <person name="Sanchez M."/>
            <person name="del Rey F."/>
            <person name="Benito J."/>
            <person name="Dominguez A."/>
            <person name="Revuelta J.L."/>
            <person name="Moreno S."/>
            <person name="Armstrong J."/>
            <person name="Forsburg S.L."/>
            <person name="Cerutti L."/>
            <person name="Lowe T."/>
            <person name="McCombie W.R."/>
            <person name="Paulsen I."/>
            <person name="Potashkin J."/>
            <person name="Shpakovski G.V."/>
            <person name="Ussery D."/>
            <person name="Barrell B.G."/>
            <person name="Nurse P."/>
        </authorList>
    </citation>
    <scope>NUCLEOTIDE SEQUENCE [LARGE SCALE GENOMIC DNA]</scope>
    <source>
        <strain>972 / ATCC 24843</strain>
    </source>
</reference>
<reference key="2">
    <citation type="journal article" date="2006" name="Nat. Biotechnol.">
        <title>ORFeome cloning and global analysis of protein localization in the fission yeast Schizosaccharomyces pombe.</title>
        <authorList>
            <person name="Matsuyama A."/>
            <person name="Arai R."/>
            <person name="Yashiroda Y."/>
            <person name="Shirai A."/>
            <person name="Kamata A."/>
            <person name="Sekido S."/>
            <person name="Kobayashi Y."/>
            <person name="Hashimoto A."/>
            <person name="Hamamoto M."/>
            <person name="Hiraoka Y."/>
            <person name="Horinouchi S."/>
            <person name="Yoshida M."/>
        </authorList>
    </citation>
    <scope>SUBCELLULAR LOCATION [LARGE SCALE ANALYSIS]</scope>
</reference>
<sequence length="292" mass="32614">MKSTFSTVLITGSSKGLGYALVKVGLAQGYNVIACSRAPDTITIEHSKLLKLKLDVTDVKSVETAFKDAKRRFGNVDIVINNAGYGLVGEFESYNIEEMHRQMNVNFWGVAYITKEALNLMRESGKGGRILQISSVAGYYPSPCLSMYNASKFAVEGLSQTIMRELDPNWNIAITIVQPGGMQTEWASSNMQWAKPHPAYENDRSWRPFWENYHGCEETDPNKAAELLYSIAKLDRPPQKLVLGHDSLELIRKQHQDIGEELESNVALSTSVAKDDFDPASVETLRQNLQSM</sequence>
<dbReference type="EC" id="1.-.-.-"/>
<dbReference type="EMBL" id="CU329672">
    <property type="protein sequence ID" value="CAA19583.1"/>
    <property type="molecule type" value="Genomic_DNA"/>
</dbReference>
<dbReference type="PIR" id="T41028">
    <property type="entry name" value="T41028"/>
</dbReference>
<dbReference type="RefSeq" id="NP_588241.1">
    <property type="nucleotide sequence ID" value="NM_001023231.2"/>
</dbReference>
<dbReference type="SMR" id="O74628"/>
<dbReference type="BioGRID" id="275948">
    <property type="interactions" value="2"/>
</dbReference>
<dbReference type="FunCoup" id="O74628">
    <property type="interactions" value="424"/>
</dbReference>
<dbReference type="STRING" id="284812.O74628"/>
<dbReference type="iPTMnet" id="O74628"/>
<dbReference type="PaxDb" id="4896-SPCC162.03.1"/>
<dbReference type="EnsemblFungi" id="SPCC162.03.1">
    <property type="protein sequence ID" value="SPCC162.03.1:pep"/>
    <property type="gene ID" value="SPCC162.03"/>
</dbReference>
<dbReference type="KEGG" id="spo:2539382"/>
<dbReference type="PomBase" id="SPCC162.03"/>
<dbReference type="VEuPathDB" id="FungiDB:SPCC162.03"/>
<dbReference type="eggNOG" id="KOG1205">
    <property type="taxonomic scope" value="Eukaryota"/>
</dbReference>
<dbReference type="HOGENOM" id="CLU_010194_2_9_1"/>
<dbReference type="InParanoid" id="O74628"/>
<dbReference type="OMA" id="HPAYEND"/>
<dbReference type="PhylomeDB" id="O74628"/>
<dbReference type="Reactome" id="R-SPO-193144">
    <property type="pathway name" value="Estrogen biosynthesis"/>
</dbReference>
<dbReference type="PRO" id="PR:O74628"/>
<dbReference type="Proteomes" id="UP000002485">
    <property type="component" value="Chromosome III"/>
</dbReference>
<dbReference type="GO" id="GO:0005829">
    <property type="term" value="C:cytosol"/>
    <property type="evidence" value="ECO:0007005"/>
    <property type="project" value="PomBase"/>
</dbReference>
<dbReference type="GO" id="GO:0016491">
    <property type="term" value="F:oxidoreductase activity"/>
    <property type="evidence" value="ECO:0000318"/>
    <property type="project" value="GO_Central"/>
</dbReference>
<dbReference type="CDD" id="cd05374">
    <property type="entry name" value="17beta-HSD-like_SDR_c"/>
    <property type="match status" value="1"/>
</dbReference>
<dbReference type="Gene3D" id="3.40.50.720">
    <property type="entry name" value="NAD(P)-binding Rossmann-like Domain"/>
    <property type="match status" value="1"/>
</dbReference>
<dbReference type="InterPro" id="IPR036291">
    <property type="entry name" value="NAD(P)-bd_dom_sf"/>
</dbReference>
<dbReference type="InterPro" id="IPR020904">
    <property type="entry name" value="Sc_DH/Rdtase_CS"/>
</dbReference>
<dbReference type="InterPro" id="IPR002347">
    <property type="entry name" value="SDR_fam"/>
</dbReference>
<dbReference type="InterPro" id="IPR051911">
    <property type="entry name" value="SDR_oxidoreductase"/>
</dbReference>
<dbReference type="PANTHER" id="PTHR43976">
    <property type="entry name" value="SHORT CHAIN DEHYDROGENASE"/>
    <property type="match status" value="1"/>
</dbReference>
<dbReference type="PANTHER" id="PTHR43976:SF16">
    <property type="entry name" value="SHORT-CHAIN DEHYDROGENASE_REDUCTASE FAMILY PROTEIN"/>
    <property type="match status" value="1"/>
</dbReference>
<dbReference type="Pfam" id="PF00106">
    <property type="entry name" value="adh_short"/>
    <property type="match status" value="1"/>
</dbReference>
<dbReference type="PRINTS" id="PR00081">
    <property type="entry name" value="GDHRDH"/>
</dbReference>
<dbReference type="PRINTS" id="PR00080">
    <property type="entry name" value="SDRFAMILY"/>
</dbReference>
<dbReference type="SUPFAM" id="SSF51735">
    <property type="entry name" value="NAD(P)-binding Rossmann-fold domains"/>
    <property type="match status" value="1"/>
</dbReference>
<dbReference type="PROSITE" id="PS00061">
    <property type="entry name" value="ADH_SHORT"/>
    <property type="match status" value="1"/>
</dbReference>
<name>YQ53_SCHPO</name>